<protein>
    <recommendedName>
        <fullName evidence="1">Guanylate kinase</fullName>
        <ecNumber evidence="1">2.7.4.8</ecNumber>
    </recommendedName>
    <alternativeName>
        <fullName evidence="1">GMP kinase</fullName>
    </alternativeName>
</protein>
<comment type="function">
    <text evidence="1">Essential for recycling GMP and indirectly, cGMP.</text>
</comment>
<comment type="catalytic activity">
    <reaction evidence="1">
        <text>GMP + ATP = GDP + ADP</text>
        <dbReference type="Rhea" id="RHEA:20780"/>
        <dbReference type="ChEBI" id="CHEBI:30616"/>
        <dbReference type="ChEBI" id="CHEBI:58115"/>
        <dbReference type="ChEBI" id="CHEBI:58189"/>
        <dbReference type="ChEBI" id="CHEBI:456216"/>
        <dbReference type="EC" id="2.7.4.8"/>
    </reaction>
</comment>
<comment type="subcellular location">
    <subcellularLocation>
        <location evidence="1">Cytoplasm</location>
    </subcellularLocation>
</comment>
<comment type="similarity">
    <text evidence="1">Belongs to the guanylate kinase family.</text>
</comment>
<gene>
    <name evidence="1" type="primary">gmk</name>
    <name type="ordered locus">jk1019</name>
</gene>
<feature type="chain" id="PRO_0000266311" description="Guanylate kinase">
    <location>
        <begin position="1"/>
        <end position="188"/>
    </location>
</feature>
<feature type="domain" description="Guanylate kinase-like" evidence="1">
    <location>
        <begin position="8"/>
        <end position="188"/>
    </location>
</feature>
<feature type="binding site" evidence="1">
    <location>
        <begin position="15"/>
        <end position="22"/>
    </location>
    <ligand>
        <name>ATP</name>
        <dbReference type="ChEBI" id="CHEBI:30616"/>
    </ligand>
</feature>
<proteinExistence type="inferred from homology"/>
<accession>Q4JVH4</accession>
<evidence type="ECO:0000255" key="1">
    <source>
        <dbReference type="HAMAP-Rule" id="MF_00328"/>
    </source>
</evidence>
<reference key="1">
    <citation type="journal article" date="2005" name="J. Bacteriol.">
        <title>Complete genome sequence and analysis of the multiresistant nosocomial pathogen Corynebacterium jeikeium K411, a lipid-requiring bacterium of the human skin flora.</title>
        <authorList>
            <person name="Tauch A."/>
            <person name="Kaiser O."/>
            <person name="Hain T."/>
            <person name="Goesmann A."/>
            <person name="Weisshaar B."/>
            <person name="Albersmeier A."/>
            <person name="Bekel T."/>
            <person name="Bischoff N."/>
            <person name="Brune I."/>
            <person name="Chakraborty T."/>
            <person name="Kalinowski J."/>
            <person name="Meyer F."/>
            <person name="Rupp O."/>
            <person name="Schneiker S."/>
            <person name="Viehoever P."/>
            <person name="Puehler A."/>
        </authorList>
    </citation>
    <scope>NUCLEOTIDE SEQUENCE [LARGE SCALE GENOMIC DNA]</scope>
    <source>
        <strain>K411</strain>
    </source>
</reference>
<keyword id="KW-0067">ATP-binding</keyword>
<keyword id="KW-0963">Cytoplasm</keyword>
<keyword id="KW-0418">Kinase</keyword>
<keyword id="KW-0547">Nucleotide-binding</keyword>
<keyword id="KW-1185">Reference proteome</keyword>
<keyword id="KW-0808">Transferase</keyword>
<organism>
    <name type="scientific">Corynebacterium jeikeium (strain K411)</name>
    <dbReference type="NCBI Taxonomy" id="306537"/>
    <lineage>
        <taxon>Bacteria</taxon>
        <taxon>Bacillati</taxon>
        <taxon>Actinomycetota</taxon>
        <taxon>Actinomycetes</taxon>
        <taxon>Mycobacteriales</taxon>
        <taxon>Corynebacteriaceae</taxon>
        <taxon>Corynebacterium</taxon>
    </lineage>
</organism>
<dbReference type="EC" id="2.7.4.8" evidence="1"/>
<dbReference type="EMBL" id="CR931997">
    <property type="protein sequence ID" value="CAI37183.1"/>
    <property type="molecule type" value="Genomic_DNA"/>
</dbReference>
<dbReference type="RefSeq" id="WP_011273591.1">
    <property type="nucleotide sequence ID" value="NC_007164.1"/>
</dbReference>
<dbReference type="SMR" id="Q4JVH4"/>
<dbReference type="STRING" id="306537.jk1019"/>
<dbReference type="KEGG" id="cjk:jk1019"/>
<dbReference type="PATRIC" id="fig|306537.10.peg.1031"/>
<dbReference type="eggNOG" id="COG0194">
    <property type="taxonomic scope" value="Bacteria"/>
</dbReference>
<dbReference type="HOGENOM" id="CLU_001715_1_1_11"/>
<dbReference type="OrthoDB" id="9808150at2"/>
<dbReference type="Proteomes" id="UP000000545">
    <property type="component" value="Chromosome"/>
</dbReference>
<dbReference type="GO" id="GO:0005829">
    <property type="term" value="C:cytosol"/>
    <property type="evidence" value="ECO:0007669"/>
    <property type="project" value="TreeGrafter"/>
</dbReference>
<dbReference type="GO" id="GO:0005524">
    <property type="term" value="F:ATP binding"/>
    <property type="evidence" value="ECO:0007669"/>
    <property type="project" value="UniProtKB-UniRule"/>
</dbReference>
<dbReference type="GO" id="GO:0004385">
    <property type="term" value="F:guanylate kinase activity"/>
    <property type="evidence" value="ECO:0007669"/>
    <property type="project" value="UniProtKB-UniRule"/>
</dbReference>
<dbReference type="CDD" id="cd00071">
    <property type="entry name" value="GMPK"/>
    <property type="match status" value="1"/>
</dbReference>
<dbReference type="FunFam" id="3.30.63.10:FF:000002">
    <property type="entry name" value="Guanylate kinase 1"/>
    <property type="match status" value="1"/>
</dbReference>
<dbReference type="Gene3D" id="3.30.63.10">
    <property type="entry name" value="Guanylate Kinase phosphate binding domain"/>
    <property type="match status" value="1"/>
</dbReference>
<dbReference type="Gene3D" id="3.40.50.300">
    <property type="entry name" value="P-loop containing nucleotide triphosphate hydrolases"/>
    <property type="match status" value="1"/>
</dbReference>
<dbReference type="HAMAP" id="MF_00328">
    <property type="entry name" value="Guanylate_kinase"/>
    <property type="match status" value="1"/>
</dbReference>
<dbReference type="InterPro" id="IPR008145">
    <property type="entry name" value="GK/Ca_channel_bsu"/>
</dbReference>
<dbReference type="InterPro" id="IPR008144">
    <property type="entry name" value="Guanylate_kin-like_dom"/>
</dbReference>
<dbReference type="InterPro" id="IPR017665">
    <property type="entry name" value="Guanylate_kinase"/>
</dbReference>
<dbReference type="InterPro" id="IPR020590">
    <property type="entry name" value="Guanylate_kinase_CS"/>
</dbReference>
<dbReference type="InterPro" id="IPR027417">
    <property type="entry name" value="P-loop_NTPase"/>
</dbReference>
<dbReference type="NCBIfam" id="TIGR03263">
    <property type="entry name" value="guanyl_kin"/>
    <property type="match status" value="1"/>
</dbReference>
<dbReference type="PANTHER" id="PTHR23117:SF13">
    <property type="entry name" value="GUANYLATE KINASE"/>
    <property type="match status" value="1"/>
</dbReference>
<dbReference type="PANTHER" id="PTHR23117">
    <property type="entry name" value="GUANYLATE KINASE-RELATED"/>
    <property type="match status" value="1"/>
</dbReference>
<dbReference type="Pfam" id="PF00625">
    <property type="entry name" value="Guanylate_kin"/>
    <property type="match status" value="1"/>
</dbReference>
<dbReference type="SMART" id="SM00072">
    <property type="entry name" value="GuKc"/>
    <property type="match status" value="1"/>
</dbReference>
<dbReference type="SUPFAM" id="SSF52540">
    <property type="entry name" value="P-loop containing nucleoside triphosphate hydrolases"/>
    <property type="match status" value="1"/>
</dbReference>
<dbReference type="PROSITE" id="PS00856">
    <property type="entry name" value="GUANYLATE_KINASE_1"/>
    <property type="match status" value="1"/>
</dbReference>
<dbReference type="PROSITE" id="PS50052">
    <property type="entry name" value="GUANYLATE_KINASE_2"/>
    <property type="match status" value="1"/>
</dbReference>
<sequence>MSQDLNSGRIVVLAGPSAVGKSTVVRRLRTDVPDLFFSVSMTTRDPRPGEVDGEDYIYVTREQFEQNIAADKMLEWAEIHGGLQLSGTPREPIEKALAESRPVLVEVDLEGARNVKKMLPQVQTVFLAPPSWEELVDRLTGRGTETQDVIERRLQTAKVEMASQSEFDHVVVNDDVDKAVAAISEILR</sequence>
<name>KGUA_CORJK</name>